<reference key="1">
    <citation type="journal article" date="1998" name="DNA Res.">
        <title>Structural analysis of Arabidopsis thaliana chromosome 5. IV. Sequence features of the regions of 1,456,315 bp covered by nineteen physically assigned P1 and TAC clones.</title>
        <authorList>
            <person name="Sato S."/>
            <person name="Kaneko T."/>
            <person name="Kotani H."/>
            <person name="Nakamura Y."/>
            <person name="Asamizu E."/>
            <person name="Miyajima N."/>
            <person name="Tabata S."/>
        </authorList>
    </citation>
    <scope>NUCLEOTIDE SEQUENCE [LARGE SCALE GENOMIC DNA]</scope>
    <source>
        <strain>cv. Columbia</strain>
    </source>
</reference>
<reference key="2">
    <citation type="journal article" date="2000" name="Nature">
        <title>Sequence and analysis of chromosome 5 of the plant Arabidopsis thaliana.</title>
        <authorList>
            <person name="Tabata S."/>
            <person name="Kaneko T."/>
            <person name="Nakamura Y."/>
            <person name="Kotani H."/>
            <person name="Kato T."/>
            <person name="Asamizu E."/>
            <person name="Miyajima N."/>
            <person name="Sasamoto S."/>
            <person name="Kimura T."/>
            <person name="Hosouchi T."/>
            <person name="Kawashima K."/>
            <person name="Kohara M."/>
            <person name="Matsumoto M."/>
            <person name="Matsuno A."/>
            <person name="Muraki A."/>
            <person name="Nakayama S."/>
            <person name="Nakazaki N."/>
            <person name="Naruo K."/>
            <person name="Okumura S."/>
            <person name="Shinpo S."/>
            <person name="Takeuchi C."/>
            <person name="Wada T."/>
            <person name="Watanabe A."/>
            <person name="Yamada M."/>
            <person name="Yasuda M."/>
            <person name="Sato S."/>
            <person name="de la Bastide M."/>
            <person name="Huang E."/>
            <person name="Spiegel L."/>
            <person name="Gnoj L."/>
            <person name="O'Shaughnessy A."/>
            <person name="Preston R."/>
            <person name="Habermann K."/>
            <person name="Murray J."/>
            <person name="Johnson D."/>
            <person name="Rohlfing T."/>
            <person name="Nelson J."/>
            <person name="Stoneking T."/>
            <person name="Pepin K."/>
            <person name="Spieth J."/>
            <person name="Sekhon M."/>
            <person name="Armstrong J."/>
            <person name="Becker M."/>
            <person name="Belter E."/>
            <person name="Cordum H."/>
            <person name="Cordes M."/>
            <person name="Courtney L."/>
            <person name="Courtney W."/>
            <person name="Dante M."/>
            <person name="Du H."/>
            <person name="Edwards J."/>
            <person name="Fryman J."/>
            <person name="Haakensen B."/>
            <person name="Lamar E."/>
            <person name="Latreille P."/>
            <person name="Leonard S."/>
            <person name="Meyer R."/>
            <person name="Mulvaney E."/>
            <person name="Ozersky P."/>
            <person name="Riley A."/>
            <person name="Strowmatt C."/>
            <person name="Wagner-McPherson C."/>
            <person name="Wollam A."/>
            <person name="Yoakum M."/>
            <person name="Bell M."/>
            <person name="Dedhia N."/>
            <person name="Parnell L."/>
            <person name="Shah R."/>
            <person name="Rodriguez M."/>
            <person name="Hoon See L."/>
            <person name="Vil D."/>
            <person name="Baker J."/>
            <person name="Kirchoff K."/>
            <person name="Toth K."/>
            <person name="King L."/>
            <person name="Bahret A."/>
            <person name="Miller B."/>
            <person name="Marra M.A."/>
            <person name="Martienssen R."/>
            <person name="McCombie W.R."/>
            <person name="Wilson R.K."/>
            <person name="Murphy G."/>
            <person name="Bancroft I."/>
            <person name="Volckaert G."/>
            <person name="Wambutt R."/>
            <person name="Duesterhoeft A."/>
            <person name="Stiekema W."/>
            <person name="Pohl T."/>
            <person name="Entian K.-D."/>
            <person name="Terryn N."/>
            <person name="Hartley N."/>
            <person name="Bent E."/>
            <person name="Johnson S."/>
            <person name="Langham S.-A."/>
            <person name="McCullagh B."/>
            <person name="Robben J."/>
            <person name="Grymonprez B."/>
            <person name="Zimmermann W."/>
            <person name="Ramsperger U."/>
            <person name="Wedler H."/>
            <person name="Balke K."/>
            <person name="Wedler E."/>
            <person name="Peters S."/>
            <person name="van Staveren M."/>
            <person name="Dirkse W."/>
            <person name="Mooijman P."/>
            <person name="Klein Lankhorst R."/>
            <person name="Weitzenegger T."/>
            <person name="Bothe G."/>
            <person name="Rose M."/>
            <person name="Hauf J."/>
            <person name="Berneiser S."/>
            <person name="Hempel S."/>
            <person name="Feldpausch M."/>
            <person name="Lamberth S."/>
            <person name="Villarroel R."/>
            <person name="Gielen J."/>
            <person name="Ardiles W."/>
            <person name="Bents O."/>
            <person name="Lemcke K."/>
            <person name="Kolesov G."/>
            <person name="Mayer K.F.X."/>
            <person name="Rudd S."/>
            <person name="Schoof H."/>
            <person name="Schueller C."/>
            <person name="Zaccaria P."/>
            <person name="Mewes H.-W."/>
            <person name="Bevan M."/>
            <person name="Fransz P.F."/>
        </authorList>
    </citation>
    <scope>NUCLEOTIDE SEQUENCE [LARGE SCALE GENOMIC DNA]</scope>
    <source>
        <strain>cv. Columbia</strain>
    </source>
</reference>
<reference key="3">
    <citation type="journal article" date="2017" name="Plant J.">
        <title>Araport11: a complete reannotation of the Arabidopsis thaliana reference genome.</title>
        <authorList>
            <person name="Cheng C.Y."/>
            <person name="Krishnakumar V."/>
            <person name="Chan A.P."/>
            <person name="Thibaud-Nissen F."/>
            <person name="Schobel S."/>
            <person name="Town C.D."/>
        </authorList>
    </citation>
    <scope>GENOME REANNOTATION</scope>
    <source>
        <strain>cv. Columbia</strain>
    </source>
</reference>
<reference key="4">
    <citation type="journal article" date="2002" name="Science">
        <title>Functional annotation of a full-length Arabidopsis cDNA collection.</title>
        <authorList>
            <person name="Seki M."/>
            <person name="Narusaka M."/>
            <person name="Kamiya A."/>
            <person name="Ishida J."/>
            <person name="Satou M."/>
            <person name="Sakurai T."/>
            <person name="Nakajima M."/>
            <person name="Enju A."/>
            <person name="Akiyama K."/>
            <person name="Oono Y."/>
            <person name="Muramatsu M."/>
            <person name="Hayashizaki Y."/>
            <person name="Kawai J."/>
            <person name="Carninci P."/>
            <person name="Itoh M."/>
            <person name="Ishii Y."/>
            <person name="Arakawa T."/>
            <person name="Shibata K."/>
            <person name="Shinagawa A."/>
            <person name="Shinozaki K."/>
        </authorList>
    </citation>
    <scope>NUCLEOTIDE SEQUENCE [LARGE SCALE MRNA]</scope>
    <source>
        <strain>cv. Columbia</strain>
    </source>
</reference>
<reference key="5">
    <citation type="journal article" date="2003" name="Science">
        <title>Empirical analysis of transcriptional activity in the Arabidopsis genome.</title>
        <authorList>
            <person name="Yamada K."/>
            <person name="Lim J."/>
            <person name="Dale J.M."/>
            <person name="Chen H."/>
            <person name="Shinn P."/>
            <person name="Palm C.J."/>
            <person name="Southwick A.M."/>
            <person name="Wu H.C."/>
            <person name="Kim C.J."/>
            <person name="Nguyen M."/>
            <person name="Pham P.K."/>
            <person name="Cheuk R.F."/>
            <person name="Karlin-Newmann G."/>
            <person name="Liu S.X."/>
            <person name="Lam B."/>
            <person name="Sakano H."/>
            <person name="Wu T."/>
            <person name="Yu G."/>
            <person name="Miranda M."/>
            <person name="Quach H.L."/>
            <person name="Tripp M."/>
            <person name="Chang C.H."/>
            <person name="Lee J.M."/>
            <person name="Toriumi M.J."/>
            <person name="Chan M.M."/>
            <person name="Tang C.C."/>
            <person name="Onodera C.S."/>
            <person name="Deng J.M."/>
            <person name="Akiyama K."/>
            <person name="Ansari Y."/>
            <person name="Arakawa T."/>
            <person name="Banh J."/>
            <person name="Banno F."/>
            <person name="Bowser L."/>
            <person name="Brooks S.Y."/>
            <person name="Carninci P."/>
            <person name="Chao Q."/>
            <person name="Choy N."/>
            <person name="Enju A."/>
            <person name="Goldsmith A.D."/>
            <person name="Gurjal M."/>
            <person name="Hansen N.F."/>
            <person name="Hayashizaki Y."/>
            <person name="Johnson-Hopson C."/>
            <person name="Hsuan V.W."/>
            <person name="Iida K."/>
            <person name="Karnes M."/>
            <person name="Khan S."/>
            <person name="Koesema E."/>
            <person name="Ishida J."/>
            <person name="Jiang P.X."/>
            <person name="Jones T."/>
            <person name="Kawai J."/>
            <person name="Kamiya A."/>
            <person name="Meyers C."/>
            <person name="Nakajima M."/>
            <person name="Narusaka M."/>
            <person name="Seki M."/>
            <person name="Sakurai T."/>
            <person name="Satou M."/>
            <person name="Tamse R."/>
            <person name="Vaysberg M."/>
            <person name="Wallender E.K."/>
            <person name="Wong C."/>
            <person name="Yamamura Y."/>
            <person name="Yuan S."/>
            <person name="Shinozaki K."/>
            <person name="Davis R.W."/>
            <person name="Theologis A."/>
            <person name="Ecker J.R."/>
        </authorList>
    </citation>
    <scope>NUCLEOTIDE SEQUENCE [LARGE SCALE MRNA]</scope>
    <source>
        <strain>cv. Columbia</strain>
    </source>
</reference>
<reference key="6">
    <citation type="submission" date="2006-07" db="EMBL/GenBank/DDBJ databases">
        <title>Large-scale analysis of RIKEN Arabidopsis full-length (RAFL) cDNAs.</title>
        <authorList>
            <person name="Totoki Y."/>
            <person name="Seki M."/>
            <person name="Ishida J."/>
            <person name="Nakajima M."/>
            <person name="Enju A."/>
            <person name="Kamiya A."/>
            <person name="Narusaka M."/>
            <person name="Shin-i T."/>
            <person name="Nakagawa M."/>
            <person name="Sakamoto N."/>
            <person name="Oishi K."/>
            <person name="Kohara Y."/>
            <person name="Kobayashi M."/>
            <person name="Toyoda A."/>
            <person name="Sakaki Y."/>
            <person name="Sakurai T."/>
            <person name="Iida K."/>
            <person name="Akiyama K."/>
            <person name="Satou M."/>
            <person name="Toyoda T."/>
            <person name="Konagaya A."/>
            <person name="Carninci P."/>
            <person name="Kawai J."/>
            <person name="Hayashizaki Y."/>
            <person name="Shinozaki K."/>
        </authorList>
    </citation>
    <scope>NUCLEOTIDE SEQUENCE [LARGE SCALE MRNA]</scope>
    <source>
        <strain>cv. Columbia</strain>
    </source>
</reference>
<reference key="7">
    <citation type="journal article" date="2012" name="Plant J.">
        <title>The wavy growth 3 E3 ligase family controls the gravitropic response in Arabidopsis roots.</title>
        <authorList>
            <person name="Sakai T."/>
            <person name="Mochizuki S."/>
            <person name="Haga K."/>
            <person name="Uehara Y."/>
            <person name="Suzuki A."/>
            <person name="Harada A."/>
            <person name="Wada T."/>
            <person name="Ishiguro S."/>
            <person name="Okada K."/>
        </authorList>
    </citation>
    <scope>FUNCTION</scope>
    <scope>TISSUE SPECIFICITY</scope>
    <source>
        <strain>cv. Landsberg erecta</strain>
    </source>
</reference>
<gene>
    <name evidence="5" type="primary">WAVH2</name>
    <name evidence="7" type="ordered locus">At5g65683</name>
    <name evidence="8" type="ORF">F6H11.200</name>
</gene>
<evidence type="ECO:0000255" key="1">
    <source>
        <dbReference type="PROSITE-ProRule" id="PRU00175"/>
    </source>
</evidence>
<evidence type="ECO:0000255" key="2">
    <source>
        <dbReference type="PROSITE-ProRule" id="PRU00219"/>
    </source>
</evidence>
<evidence type="ECO:0000256" key="3">
    <source>
        <dbReference type="SAM" id="MobiDB-lite"/>
    </source>
</evidence>
<evidence type="ECO:0000269" key="4">
    <source>
    </source>
</evidence>
<evidence type="ECO:0000303" key="5">
    <source>
    </source>
</evidence>
<evidence type="ECO:0000305" key="6"/>
<evidence type="ECO:0000312" key="7">
    <source>
        <dbReference type="Araport" id="AT5G65683"/>
    </source>
</evidence>
<evidence type="ECO:0000312" key="8">
    <source>
        <dbReference type="EMBL" id="CAA16691.1"/>
    </source>
</evidence>
<feature type="chain" id="PRO_0000443506" description="Probable E3 ubiquitin-protein ligase WAVH2">
    <location>
        <begin position="1"/>
        <end position="717"/>
    </location>
</feature>
<feature type="domain" description="VWFA" evidence="2">
    <location>
        <begin position="326"/>
        <end position="456"/>
    </location>
</feature>
<feature type="zinc finger region" description="RING-type; atypical" evidence="1">
    <location>
        <begin position="140"/>
        <end position="184"/>
    </location>
</feature>
<feature type="region of interest" description="Disordered" evidence="3">
    <location>
        <begin position="13"/>
        <end position="120"/>
    </location>
</feature>
<feature type="compositionally biased region" description="Polar residues" evidence="3">
    <location>
        <begin position="13"/>
        <end position="28"/>
    </location>
</feature>
<feature type="compositionally biased region" description="Polar residues" evidence="3">
    <location>
        <begin position="85"/>
        <end position="94"/>
    </location>
</feature>
<feature type="compositionally biased region" description="Low complexity" evidence="3">
    <location>
        <begin position="95"/>
        <end position="117"/>
    </location>
</feature>
<feature type="sequence conflict" description="In Ref. 4; BAC42427 and 5; AAO64895." evidence="6" ref="4 5">
    <original>F</original>
    <variation>L</variation>
    <location>
        <position position="42"/>
    </location>
</feature>
<feature type="sequence conflict" description="In Ref. 4; BAC42427 and 5; AAO64895." evidence="6" ref="4 5">
    <original>S</original>
    <variation>P</variation>
    <location>
        <position position="523"/>
    </location>
</feature>
<organism>
    <name type="scientific">Arabidopsis thaliana</name>
    <name type="common">Mouse-ear cress</name>
    <dbReference type="NCBI Taxonomy" id="3702"/>
    <lineage>
        <taxon>Eukaryota</taxon>
        <taxon>Viridiplantae</taxon>
        <taxon>Streptophyta</taxon>
        <taxon>Embryophyta</taxon>
        <taxon>Tracheophyta</taxon>
        <taxon>Spermatophyta</taxon>
        <taxon>Magnoliopsida</taxon>
        <taxon>eudicotyledons</taxon>
        <taxon>Gunneridae</taxon>
        <taxon>Pentapetalae</taxon>
        <taxon>rosids</taxon>
        <taxon>malvids</taxon>
        <taxon>Brassicales</taxon>
        <taxon>Brassicaceae</taxon>
        <taxon>Camelineae</taxon>
        <taxon>Arabidopsis</taxon>
    </lineage>
</organism>
<dbReference type="EC" id="2.3.2.27" evidence="6"/>
<dbReference type="EMBL" id="AB010075">
    <property type="protein sequence ID" value="BAB10674.1"/>
    <property type="status" value="ALT_SEQ"/>
    <property type="molecule type" value="Genomic_DNA"/>
</dbReference>
<dbReference type="EMBL" id="AL021684">
    <property type="protein sequence ID" value="CAA16691.1"/>
    <property type="status" value="ALT_SEQ"/>
    <property type="molecule type" value="Genomic_DNA"/>
</dbReference>
<dbReference type="EMBL" id="CP002688">
    <property type="protein sequence ID" value="AED98086.1"/>
    <property type="molecule type" value="Genomic_DNA"/>
</dbReference>
<dbReference type="EMBL" id="AK117780">
    <property type="protein sequence ID" value="BAC42427.1"/>
    <property type="molecule type" value="mRNA"/>
</dbReference>
<dbReference type="EMBL" id="BT005960">
    <property type="protein sequence ID" value="AAO64895.1"/>
    <property type="molecule type" value="mRNA"/>
</dbReference>
<dbReference type="EMBL" id="AK228549">
    <property type="protein sequence ID" value="BAF00470.1"/>
    <property type="molecule type" value="mRNA"/>
</dbReference>
<dbReference type="PIR" id="T05901">
    <property type="entry name" value="T05901"/>
</dbReference>
<dbReference type="RefSeq" id="NP_680467.1">
    <property type="nucleotide sequence ID" value="NM_148162.4"/>
</dbReference>
<dbReference type="SMR" id="Q0WQX9"/>
<dbReference type="FunCoup" id="Q0WQX9">
    <property type="interactions" value="1"/>
</dbReference>
<dbReference type="IntAct" id="Q0WQX9">
    <property type="interactions" value="29"/>
</dbReference>
<dbReference type="STRING" id="3702.Q0WQX9"/>
<dbReference type="iPTMnet" id="Q0WQX9"/>
<dbReference type="PaxDb" id="3702-AT5G65683.1"/>
<dbReference type="ProteomicsDB" id="242653"/>
<dbReference type="EnsemblPlants" id="AT5G65683.1">
    <property type="protein sequence ID" value="AT5G65683.1"/>
    <property type="gene ID" value="AT5G65683"/>
</dbReference>
<dbReference type="GeneID" id="836695"/>
<dbReference type="Gramene" id="AT5G65683.1">
    <property type="protein sequence ID" value="AT5G65683.1"/>
    <property type="gene ID" value="AT5G65683"/>
</dbReference>
<dbReference type="KEGG" id="ath:AT5G65683"/>
<dbReference type="Araport" id="AT5G65683"/>
<dbReference type="TAIR" id="AT5G65683">
    <property type="gene designation" value="WAVH2"/>
</dbReference>
<dbReference type="eggNOG" id="ENOG502QVJZ">
    <property type="taxonomic scope" value="Eukaryota"/>
</dbReference>
<dbReference type="HOGENOM" id="CLU_006228_3_0_1"/>
<dbReference type="InParanoid" id="Q0WQX9"/>
<dbReference type="OMA" id="NIHLVCR"/>
<dbReference type="OrthoDB" id="687730at2759"/>
<dbReference type="PhylomeDB" id="Q0WQX9"/>
<dbReference type="PRO" id="PR:Q0WQX9"/>
<dbReference type="Proteomes" id="UP000006548">
    <property type="component" value="Chromosome 5"/>
</dbReference>
<dbReference type="ExpressionAtlas" id="Q0WQX9">
    <property type="expression patterns" value="baseline and differential"/>
</dbReference>
<dbReference type="GO" id="GO:0016740">
    <property type="term" value="F:transferase activity"/>
    <property type="evidence" value="ECO:0007669"/>
    <property type="project" value="UniProtKB-KW"/>
</dbReference>
<dbReference type="GO" id="GO:0008270">
    <property type="term" value="F:zinc ion binding"/>
    <property type="evidence" value="ECO:0007669"/>
    <property type="project" value="UniProtKB-KW"/>
</dbReference>
<dbReference type="GO" id="GO:0009630">
    <property type="term" value="P:gravitropism"/>
    <property type="evidence" value="ECO:0000315"/>
    <property type="project" value="UniProtKB"/>
</dbReference>
<dbReference type="GO" id="GO:0048364">
    <property type="term" value="P:root development"/>
    <property type="evidence" value="ECO:0000315"/>
    <property type="project" value="UniProtKB"/>
</dbReference>
<dbReference type="CDD" id="cd23114">
    <property type="entry name" value="RING-H2_WAVH2"/>
    <property type="match status" value="1"/>
</dbReference>
<dbReference type="CDD" id="cd01466">
    <property type="entry name" value="vWA_C3HC4_type"/>
    <property type="match status" value="1"/>
</dbReference>
<dbReference type="FunFam" id="3.40.50.410:FF:000129">
    <property type="entry name" value="Probable E3 ubiquitin-protein ligase EDA40"/>
    <property type="match status" value="1"/>
</dbReference>
<dbReference type="Gene3D" id="3.40.50.410">
    <property type="entry name" value="von Willebrand factor, type A domain"/>
    <property type="match status" value="1"/>
</dbReference>
<dbReference type="Gene3D" id="3.30.40.10">
    <property type="entry name" value="Zinc/RING finger domain, C3HC4 (zinc finger)"/>
    <property type="match status" value="1"/>
</dbReference>
<dbReference type="InterPro" id="IPR051266">
    <property type="entry name" value="CLCR"/>
</dbReference>
<dbReference type="InterPro" id="IPR002035">
    <property type="entry name" value="VWF_A"/>
</dbReference>
<dbReference type="InterPro" id="IPR036465">
    <property type="entry name" value="vWFA_dom_sf"/>
</dbReference>
<dbReference type="InterPro" id="IPR001841">
    <property type="entry name" value="Znf_RING"/>
</dbReference>
<dbReference type="InterPro" id="IPR013083">
    <property type="entry name" value="Znf_RING/FYVE/PHD"/>
</dbReference>
<dbReference type="PANTHER" id="PTHR10579">
    <property type="entry name" value="CALCIUM-ACTIVATED CHLORIDE CHANNEL REGULATOR"/>
    <property type="match status" value="1"/>
</dbReference>
<dbReference type="PANTHER" id="PTHR10579:SF153">
    <property type="entry name" value="E3 UBIQUITIN-PROTEIN LIGASE WAVH2-RELATED"/>
    <property type="match status" value="1"/>
</dbReference>
<dbReference type="Pfam" id="PF00092">
    <property type="entry name" value="VWA"/>
    <property type="match status" value="1"/>
</dbReference>
<dbReference type="Pfam" id="PF25243">
    <property type="entry name" value="WAV3_C"/>
    <property type="match status" value="1"/>
</dbReference>
<dbReference type="Pfam" id="PF17123">
    <property type="entry name" value="zf-RING_11"/>
    <property type="match status" value="1"/>
</dbReference>
<dbReference type="SMART" id="SM00184">
    <property type="entry name" value="RING"/>
    <property type="match status" value="1"/>
</dbReference>
<dbReference type="SMART" id="SM00327">
    <property type="entry name" value="VWA"/>
    <property type="match status" value="1"/>
</dbReference>
<dbReference type="SUPFAM" id="SSF57850">
    <property type="entry name" value="RING/U-box"/>
    <property type="match status" value="1"/>
</dbReference>
<dbReference type="SUPFAM" id="SSF53300">
    <property type="entry name" value="vWA-like"/>
    <property type="match status" value="1"/>
</dbReference>
<dbReference type="PROSITE" id="PS50234">
    <property type="entry name" value="VWFA"/>
    <property type="match status" value="1"/>
</dbReference>
<dbReference type="PROSITE" id="PS50089">
    <property type="entry name" value="ZF_RING_2"/>
    <property type="match status" value="1"/>
</dbReference>
<comment type="function">
    <text evidence="4">Probable E3 ubiquitin-protein ligase involved in the regulation of root growth. Acts as a positive regulator of root gravitropism.</text>
</comment>
<comment type="catalytic activity">
    <reaction evidence="6">
        <text>S-ubiquitinyl-[E2 ubiquitin-conjugating enzyme]-L-cysteine + [acceptor protein]-L-lysine = [E2 ubiquitin-conjugating enzyme]-L-cysteine + N(6)-ubiquitinyl-[acceptor protein]-L-lysine.</text>
        <dbReference type="EC" id="2.3.2.27"/>
    </reaction>
</comment>
<comment type="interaction">
    <interactant intactId="EBI-4426718">
        <id>Q0WQX9</id>
    </interactant>
    <interactant intactId="EBI-4426649">
        <id>Q17TI5</id>
        <label>BRX</label>
    </interactant>
    <organismsDiffer>false</organismsDiffer>
    <experiments>3</experiments>
</comment>
<comment type="interaction">
    <interactant intactId="EBI-4426718">
        <id>Q0WQX9</id>
    </interactant>
    <interactant intactId="EBI-963665">
        <id>Q8GXW1</id>
        <label>RGL2</label>
    </interactant>
    <organismsDiffer>false</organismsDiffer>
    <experiments>3</experiments>
</comment>
<comment type="tissue specificity">
    <text evidence="4">Expressed in root tips, cotyledons, leaf primordia and hypocotyls.</text>
</comment>
<comment type="sequence caution" evidence="6">
    <conflict type="erroneous gene model prediction">
        <sequence resource="EMBL-CDS" id="BAB10674"/>
    </conflict>
</comment>
<comment type="sequence caution" evidence="6">
    <conflict type="erroneous gene model prediction">
        <sequence resource="EMBL-CDS" id="CAA16691"/>
    </conflict>
</comment>
<proteinExistence type="evidence at protein level"/>
<keyword id="KW-0479">Metal-binding</keyword>
<keyword id="KW-1185">Reference proteome</keyword>
<keyword id="KW-0808">Transferase</keyword>
<keyword id="KW-0833">Ubl conjugation pathway</keyword>
<keyword id="KW-0862">Zinc</keyword>
<keyword id="KW-0863">Zinc-finger</keyword>
<name>WAVH2_ARATH</name>
<sequence length="717" mass="78579">MVFGWRKAFCTSVSSNQDKPQQHSSLHTTDPPIPTPRFRSKFGFLSNPSTPRLRSRGGSGTGCRSSASTSVTIPSLPTSPKLHCRTTSNATPRTSNSSSPKFFSNPSSPKSSSSSSSQGGGGVSLLRATLLLNKSNSSRCAICLQRVNSNQSNSTAAIFTAECSHSFHLSCVNGLEDKRCPFCSAAWNHAPKSNYPAVNNNFGSDPIRRPEIREIKTGKSLRVYNDDEPLAYSPVSLAQINTIHESDENDDVEDDDDFPGFFRDSSITSDMVPSISGNLEVKLLPESAVVETGKKKETHVVIMKLKASPSPSSITDAIKARRPSIDLVTVLDLSNGGANLQTVKHAMRSVISLLREMDRLSIVVFSTGSKRLMPLRRMTAKGRRSARRMVDALGGMETTGGVGMSVNDALKKAVKVVEDRREKNPSTSIFVLSDGQDQPEAVLKAKLNATRIPFVVSTTRFSRPEIPVHSVYIASPGALLHAPLRDAFTERIASLLNVTLHNVKLNLSLVNGSHLTEISSVYSLTGRLENFGSGSVIQVGDLFAEEEREFLVELKVPTSSSGSHQVMSVQSSIVDQMTHQPMTCPKEKRFLIPRPQSVRYVSSSIERLRNLHSMCRAVADSRRLIEREDLSGAYQVLTTARSNASHSDDSLRSLEVELNELSRIKPRNSILNRTEDKPEQLTPTSAWRAAEKLAKVAIMRKHLNRVSDMHGLENARF</sequence>
<protein>
    <recommendedName>
        <fullName evidence="6">Probable E3 ubiquitin-protein ligase WAVH2</fullName>
        <ecNumber evidence="6">2.3.2.27</ecNumber>
    </recommendedName>
    <alternativeName>
        <fullName evidence="5">Protein WAV3 homolog 2</fullName>
    </alternativeName>
    <alternativeName>
        <fullName evidence="6">RING-type E3 ubiquitin transferase WAVH2</fullName>
    </alternativeName>
</protein>
<accession>Q0WQX9</accession>
<accession>O49548</accession>
<accession>Q8GY95</accession>